<feature type="peptide" id="PRO_0000378703" description="Pyrokinin-5" evidence="3">
    <location>
        <begin position="1"/>
        <end position="17"/>
    </location>
</feature>
<feature type="modified residue" description="Leucine amide" evidence="3">
    <location>
        <position position="17"/>
    </location>
</feature>
<evidence type="ECO:0000250" key="1">
    <source>
        <dbReference type="UniProtKB" id="P82617"/>
    </source>
</evidence>
<evidence type="ECO:0000255" key="2"/>
<evidence type="ECO:0000269" key="3">
    <source>
    </source>
</evidence>
<evidence type="ECO:0000303" key="4">
    <source>
    </source>
</evidence>
<evidence type="ECO:0000305" key="5"/>
<comment type="function">
    <text evidence="1">Myoactive.</text>
</comment>
<comment type="subcellular location">
    <subcellularLocation>
        <location evidence="5">Secreted</location>
    </subcellularLocation>
</comment>
<comment type="similarity">
    <text evidence="2">Belongs to the pyrokinin family.</text>
</comment>
<proteinExistence type="evidence at protein level"/>
<name>PPK5_LUCSU</name>
<organism>
    <name type="scientific">Lucihormetica subcincta</name>
    <name type="common">Glow spot roach</name>
    <dbReference type="NCBI Taxonomy" id="406666"/>
    <lineage>
        <taxon>Eukaryota</taxon>
        <taxon>Metazoa</taxon>
        <taxon>Ecdysozoa</taxon>
        <taxon>Arthropoda</taxon>
        <taxon>Hexapoda</taxon>
        <taxon>Insecta</taxon>
        <taxon>Pterygota</taxon>
        <taxon>Neoptera</taxon>
        <taxon>Polyneoptera</taxon>
        <taxon>Dictyoptera</taxon>
        <taxon>Blattodea</taxon>
        <taxon>Blaberoidea</taxon>
        <taxon>Blaberidae</taxon>
        <taxon>Blaberinae</taxon>
        <taxon>Lucihormetica</taxon>
    </lineage>
</organism>
<keyword id="KW-0027">Amidation</keyword>
<keyword id="KW-0903">Direct protein sequencing</keyword>
<keyword id="KW-0527">Neuropeptide</keyword>
<keyword id="KW-0964">Secreted</keyword>
<sequence length="17" mass="1823">GGESSNEAKGMWFGPRL</sequence>
<accession>P85669</accession>
<protein>
    <recommendedName>
        <fullName evidence="1">Pyrokinin-5</fullName>
    </recommendedName>
    <alternativeName>
        <fullName evidence="1">FXPRL-amide</fullName>
    </alternativeName>
    <alternativeName>
        <fullName evidence="4">LucSu-Capa-PK</fullName>
    </alternativeName>
</protein>
<dbReference type="GO" id="GO:0005576">
    <property type="term" value="C:extracellular region"/>
    <property type="evidence" value="ECO:0007669"/>
    <property type="project" value="UniProtKB-SubCell"/>
</dbReference>
<dbReference type="GO" id="GO:0005184">
    <property type="term" value="F:neuropeptide hormone activity"/>
    <property type="evidence" value="ECO:0007669"/>
    <property type="project" value="InterPro"/>
</dbReference>
<dbReference type="GO" id="GO:0007218">
    <property type="term" value="P:neuropeptide signaling pathway"/>
    <property type="evidence" value="ECO:0007669"/>
    <property type="project" value="UniProtKB-KW"/>
</dbReference>
<dbReference type="InterPro" id="IPR001484">
    <property type="entry name" value="Pyrokinin_CS"/>
</dbReference>
<dbReference type="PROSITE" id="PS00539">
    <property type="entry name" value="PYROKININ"/>
    <property type="match status" value="1"/>
</dbReference>
<reference evidence="5" key="1">
    <citation type="journal article" date="2009" name="BMC Evol. Biol.">
        <title>A proteomic approach for studying insect phylogeny: CAPA peptides of ancient insect taxa (Dictyoptera, Blattoptera) as a test case.</title>
        <authorList>
            <person name="Roth S."/>
            <person name="Fromm B."/>
            <person name="Gaede G."/>
            <person name="Predel R."/>
        </authorList>
    </citation>
    <scope>PROTEIN SEQUENCE</scope>
    <scope>AMIDATION AT LEU-17</scope>
    <source>
        <tissue evidence="3">Abdominal perisympathetic organs</tissue>
    </source>
</reference>